<accession>O29102</accession>
<protein>
    <recommendedName>
        <fullName evidence="1">A-type ATP synthase subunit F</fullName>
    </recommendedName>
</protein>
<dbReference type="EMBL" id="AE000782">
    <property type="protein sequence ID" value="AAB90080.1"/>
    <property type="molecule type" value="Genomic_DNA"/>
</dbReference>
<dbReference type="PIR" id="D69395">
    <property type="entry name" value="D69395"/>
</dbReference>
<dbReference type="RefSeq" id="WP_010878661.1">
    <property type="nucleotide sequence ID" value="NC_000917.1"/>
</dbReference>
<dbReference type="PDB" id="2I4R">
    <property type="method" value="X-ray"/>
    <property type="resolution" value="2.80 A"/>
    <property type="chains" value="A/B=4-94"/>
</dbReference>
<dbReference type="PDBsum" id="2I4R"/>
<dbReference type="SMR" id="O29102"/>
<dbReference type="STRING" id="224325.AF_1165"/>
<dbReference type="PaxDb" id="224325-AF_1165"/>
<dbReference type="EnsemblBacteria" id="AAB90080">
    <property type="protein sequence ID" value="AAB90080"/>
    <property type="gene ID" value="AF_1165"/>
</dbReference>
<dbReference type="KEGG" id="afu:AF_1165"/>
<dbReference type="eggNOG" id="arCOG04102">
    <property type="taxonomic scope" value="Archaea"/>
</dbReference>
<dbReference type="HOGENOM" id="CLU_135754_2_2_2"/>
<dbReference type="OrthoDB" id="24971at2157"/>
<dbReference type="PhylomeDB" id="O29102"/>
<dbReference type="EvolutionaryTrace" id="O29102"/>
<dbReference type="Proteomes" id="UP000002199">
    <property type="component" value="Chromosome"/>
</dbReference>
<dbReference type="GO" id="GO:0005886">
    <property type="term" value="C:plasma membrane"/>
    <property type="evidence" value="ECO:0007669"/>
    <property type="project" value="UniProtKB-SubCell"/>
</dbReference>
<dbReference type="GO" id="GO:0005524">
    <property type="term" value="F:ATP binding"/>
    <property type="evidence" value="ECO:0007669"/>
    <property type="project" value="UniProtKB-UniRule"/>
</dbReference>
<dbReference type="GO" id="GO:0046933">
    <property type="term" value="F:proton-transporting ATP synthase activity, rotational mechanism"/>
    <property type="evidence" value="ECO:0007669"/>
    <property type="project" value="UniProtKB-UniRule"/>
</dbReference>
<dbReference type="GO" id="GO:0046961">
    <property type="term" value="F:proton-transporting ATPase activity, rotational mechanism"/>
    <property type="evidence" value="ECO:0007669"/>
    <property type="project" value="InterPro"/>
</dbReference>
<dbReference type="GO" id="GO:0042777">
    <property type="term" value="P:proton motive force-driven plasma membrane ATP synthesis"/>
    <property type="evidence" value="ECO:0007669"/>
    <property type="project" value="UniProtKB-UniRule"/>
</dbReference>
<dbReference type="Gene3D" id="3.40.50.10580">
    <property type="entry name" value="ATPase, V1 complex, subunit F"/>
    <property type="match status" value="1"/>
</dbReference>
<dbReference type="HAMAP" id="MF_00312">
    <property type="entry name" value="ATP_synth_F_arch"/>
    <property type="match status" value="1"/>
</dbReference>
<dbReference type="InterPro" id="IPR008218">
    <property type="entry name" value="ATPase_V1-cplx_f_g_su"/>
</dbReference>
<dbReference type="InterPro" id="IPR022944">
    <property type="entry name" value="ATPase_V1-cplx_fsu_bac/arc"/>
</dbReference>
<dbReference type="InterPro" id="IPR036906">
    <property type="entry name" value="ATPase_V1_fsu_sf"/>
</dbReference>
<dbReference type="NCBIfam" id="NF002577">
    <property type="entry name" value="PRK02228.1"/>
    <property type="match status" value="1"/>
</dbReference>
<dbReference type="Pfam" id="PF01990">
    <property type="entry name" value="ATP-synt_F"/>
    <property type="match status" value="1"/>
</dbReference>
<dbReference type="SUPFAM" id="SSF159468">
    <property type="entry name" value="AtpF-like"/>
    <property type="match status" value="1"/>
</dbReference>
<gene>
    <name evidence="1" type="primary">atpF</name>
    <name type="ordered locus">AF_1165</name>
</gene>
<proteinExistence type="evidence at protein level"/>
<name>AATF_ARCFU</name>
<keyword id="KW-0002">3D-structure</keyword>
<keyword id="KW-0066">ATP synthesis</keyword>
<keyword id="KW-1003">Cell membrane</keyword>
<keyword id="KW-0375">Hydrogen ion transport</keyword>
<keyword id="KW-0406">Ion transport</keyword>
<keyword id="KW-0472">Membrane</keyword>
<keyword id="KW-1185">Reference proteome</keyword>
<keyword id="KW-0813">Transport</keyword>
<feature type="chain" id="PRO_0000144813" description="A-type ATP synthase subunit F">
    <location>
        <begin position="1"/>
        <end position="101"/>
    </location>
</feature>
<feature type="strand" evidence="2">
    <location>
        <begin position="4"/>
        <end position="8"/>
    </location>
</feature>
<feature type="helix" evidence="2">
    <location>
        <begin position="10"/>
        <end position="18"/>
    </location>
</feature>
<feature type="strand" evidence="2">
    <location>
        <begin position="24"/>
        <end position="26"/>
    </location>
</feature>
<feature type="helix" evidence="2">
    <location>
        <begin position="30"/>
        <end position="42"/>
    </location>
</feature>
<feature type="strand" evidence="2">
    <location>
        <begin position="44"/>
        <end position="52"/>
    </location>
</feature>
<feature type="helix" evidence="2">
    <location>
        <begin position="53"/>
        <end position="55"/>
    </location>
</feature>
<feature type="helix" evidence="2">
    <location>
        <begin position="61"/>
        <end position="64"/>
    </location>
</feature>
<feature type="turn" evidence="2">
    <location>
        <begin position="65"/>
        <end position="69"/>
    </location>
</feature>
<feature type="strand" evidence="2">
    <location>
        <begin position="72"/>
        <end position="78"/>
    </location>
</feature>
<sequence length="101" mass="11272">MKKLAVVGDPDFTIGFMLAGISDIYEVTSDEEIVKAVEDVLKRDDVGVVIIKQEYLKKLPPVLRREIDEKVEPTFVSVGGTGGVEEIREKIRKAIGVDLWK</sequence>
<reference key="1">
    <citation type="journal article" date="1997" name="Nature">
        <title>The complete genome sequence of the hyperthermophilic, sulphate-reducing archaeon Archaeoglobus fulgidus.</title>
        <authorList>
            <person name="Klenk H.-P."/>
            <person name="Clayton R.A."/>
            <person name="Tomb J.-F."/>
            <person name="White O."/>
            <person name="Nelson K.E."/>
            <person name="Ketchum K.A."/>
            <person name="Dodson R.J."/>
            <person name="Gwinn M.L."/>
            <person name="Hickey E.K."/>
            <person name="Peterson J.D."/>
            <person name="Richardson D.L."/>
            <person name="Kerlavage A.R."/>
            <person name="Graham D.E."/>
            <person name="Kyrpides N.C."/>
            <person name="Fleischmann R.D."/>
            <person name="Quackenbush J."/>
            <person name="Lee N.H."/>
            <person name="Sutton G.G."/>
            <person name="Gill S.R."/>
            <person name="Kirkness E.F."/>
            <person name="Dougherty B.A."/>
            <person name="McKenney K."/>
            <person name="Adams M.D."/>
            <person name="Loftus B.J."/>
            <person name="Peterson S.N."/>
            <person name="Reich C.I."/>
            <person name="McNeil L.K."/>
            <person name="Badger J.H."/>
            <person name="Glodek A."/>
            <person name="Zhou L."/>
            <person name="Overbeek R."/>
            <person name="Gocayne J.D."/>
            <person name="Weidman J.F."/>
            <person name="McDonald L.A."/>
            <person name="Utterback T.R."/>
            <person name="Cotton M.D."/>
            <person name="Spriggs T."/>
            <person name="Artiach P."/>
            <person name="Kaine B.P."/>
            <person name="Sykes S.M."/>
            <person name="Sadow P.W."/>
            <person name="D'Andrea K.P."/>
            <person name="Bowman C."/>
            <person name="Fujii C."/>
            <person name="Garland S.A."/>
            <person name="Mason T.M."/>
            <person name="Olsen G.J."/>
            <person name="Fraser C.M."/>
            <person name="Smith H.O."/>
            <person name="Woese C.R."/>
            <person name="Venter J.C."/>
        </authorList>
    </citation>
    <scope>NUCLEOTIDE SEQUENCE [LARGE SCALE GENOMIC DNA]</scope>
    <source>
        <strain>ATCC 49558 / DSM 4304 / JCM 9628 / NBRC 100126 / VC-16</strain>
    </source>
</reference>
<comment type="function">
    <text evidence="1">Component of the A-type ATP synthase that produces ATP from ADP in the presence of a proton gradient across the membrane.</text>
</comment>
<comment type="subunit">
    <text evidence="1">Has multiple subunits with at least A(3), B(3), C, D, E, F, H, I and proteolipid K(x).</text>
</comment>
<comment type="subcellular location">
    <subcellularLocation>
        <location evidence="1">Cell membrane</location>
        <topology evidence="1">Peripheral membrane protein</topology>
    </subcellularLocation>
</comment>
<comment type="similarity">
    <text evidence="1">Belongs to the V-ATPase F subunit family.</text>
</comment>
<evidence type="ECO:0000255" key="1">
    <source>
        <dbReference type="HAMAP-Rule" id="MF_00312"/>
    </source>
</evidence>
<evidence type="ECO:0007829" key="2">
    <source>
        <dbReference type="PDB" id="2I4R"/>
    </source>
</evidence>
<organism>
    <name type="scientific">Archaeoglobus fulgidus (strain ATCC 49558 / DSM 4304 / JCM 9628 / NBRC 100126 / VC-16)</name>
    <dbReference type="NCBI Taxonomy" id="224325"/>
    <lineage>
        <taxon>Archaea</taxon>
        <taxon>Methanobacteriati</taxon>
        <taxon>Methanobacteriota</taxon>
        <taxon>Archaeoglobi</taxon>
        <taxon>Archaeoglobales</taxon>
        <taxon>Archaeoglobaceae</taxon>
        <taxon>Archaeoglobus</taxon>
    </lineage>
</organism>